<comment type="function">
    <text evidence="1">ATP-dependent specificity component of the Clp protease. It directs the protease to specific substrates. Can perform chaperone functions in the absence of ClpP.</text>
</comment>
<comment type="subunit">
    <text evidence="1">Component of the ClpX-ClpP complex. Forms a hexameric ring that, in the presence of ATP, binds to fourteen ClpP subunits assembled into a disk-like structure with a central cavity, resembling the structure of eukaryotic proteasomes.</text>
</comment>
<comment type="similarity">
    <text evidence="1">Belongs to the ClpX chaperone family.</text>
</comment>
<feature type="chain" id="PRO_1000024526" description="ATP-dependent Clp protease ATP-binding subunit ClpX">
    <location>
        <begin position="1"/>
        <end position="423"/>
    </location>
</feature>
<feature type="domain" description="ClpX-type ZB" evidence="2">
    <location>
        <begin position="3"/>
        <end position="56"/>
    </location>
</feature>
<feature type="binding site" evidence="2">
    <location>
        <position position="15"/>
    </location>
    <ligand>
        <name>Zn(2+)</name>
        <dbReference type="ChEBI" id="CHEBI:29105"/>
    </ligand>
</feature>
<feature type="binding site" evidence="2">
    <location>
        <position position="18"/>
    </location>
    <ligand>
        <name>Zn(2+)</name>
        <dbReference type="ChEBI" id="CHEBI:29105"/>
    </ligand>
</feature>
<feature type="binding site" evidence="2">
    <location>
        <position position="37"/>
    </location>
    <ligand>
        <name>Zn(2+)</name>
        <dbReference type="ChEBI" id="CHEBI:29105"/>
    </ligand>
</feature>
<feature type="binding site" evidence="2">
    <location>
        <position position="40"/>
    </location>
    <ligand>
        <name>Zn(2+)</name>
        <dbReference type="ChEBI" id="CHEBI:29105"/>
    </ligand>
</feature>
<feature type="binding site" evidence="1">
    <location>
        <begin position="122"/>
        <end position="129"/>
    </location>
    <ligand>
        <name>ATP</name>
        <dbReference type="ChEBI" id="CHEBI:30616"/>
    </ligand>
</feature>
<gene>
    <name evidence="1" type="primary">clpX</name>
    <name type="ordered locus">Bcen2424_1922</name>
</gene>
<reference key="1">
    <citation type="submission" date="2006-08" db="EMBL/GenBank/DDBJ databases">
        <title>Complete sequence of chromosome 1 of Burkholderia cenocepacia HI2424.</title>
        <authorList>
            <person name="Copeland A."/>
            <person name="Lucas S."/>
            <person name="Lapidus A."/>
            <person name="Barry K."/>
            <person name="Detter J.C."/>
            <person name="Glavina del Rio T."/>
            <person name="Hammon N."/>
            <person name="Israni S."/>
            <person name="Pitluck S."/>
            <person name="Chain P."/>
            <person name="Malfatti S."/>
            <person name="Shin M."/>
            <person name="Vergez L."/>
            <person name="Schmutz J."/>
            <person name="Larimer F."/>
            <person name="Land M."/>
            <person name="Hauser L."/>
            <person name="Kyrpides N."/>
            <person name="Kim E."/>
            <person name="LiPuma J.J."/>
            <person name="Gonzalez C.F."/>
            <person name="Konstantinidis K."/>
            <person name="Tiedje J.M."/>
            <person name="Richardson P."/>
        </authorList>
    </citation>
    <scope>NUCLEOTIDE SEQUENCE [LARGE SCALE GENOMIC DNA]</scope>
    <source>
        <strain>HI2424</strain>
    </source>
</reference>
<sequence>MADKKGSNSEKLLYCSFCGKSQHEVKKLIAGPSVFICDECIDLCNEIIRDEAAAAGVEASLSRSDLPSPQEIRDILDQYVIGQERAKKILAVAVYNHYKRLKHLDKKDDVELSKSNILLIGPTGSGKTLLAQTLARLLNVPFVIADATTLTEAGYVGEDVENIIQKLLQNCNYEVDKAQRGIVYIDEIDKISRKSDNPSITRDVSGEGVQQALLKLVEGTMASVPPQGGRKHPNQDFIQVDTTNILFICGGAFDGLEKVITDRTEKTGIGFGATVKSKQERDAGEVLRETEPEDLIKFGLIPELIGRLPVVATLGKLDEAALMKILVEPKNALVKQYHKLFAMERVELEIRPGALQAVARKAIRRKTGARGLRSIIEQALLDVMYELPTMKGVSKVIIDENVIDGDGKPLLIYEDTPKVAGSN</sequence>
<accession>A0K846</accession>
<proteinExistence type="inferred from homology"/>
<name>CLPX_BURCH</name>
<protein>
    <recommendedName>
        <fullName evidence="1">ATP-dependent Clp protease ATP-binding subunit ClpX</fullName>
    </recommendedName>
</protein>
<organism>
    <name type="scientific">Burkholderia cenocepacia (strain HI2424)</name>
    <dbReference type="NCBI Taxonomy" id="331272"/>
    <lineage>
        <taxon>Bacteria</taxon>
        <taxon>Pseudomonadati</taxon>
        <taxon>Pseudomonadota</taxon>
        <taxon>Betaproteobacteria</taxon>
        <taxon>Burkholderiales</taxon>
        <taxon>Burkholderiaceae</taxon>
        <taxon>Burkholderia</taxon>
        <taxon>Burkholderia cepacia complex</taxon>
    </lineage>
</organism>
<dbReference type="EMBL" id="CP000458">
    <property type="protein sequence ID" value="ABK08673.1"/>
    <property type="molecule type" value="Genomic_DNA"/>
</dbReference>
<dbReference type="RefSeq" id="WP_006489345.1">
    <property type="nucleotide sequence ID" value="NC_008542.1"/>
</dbReference>
<dbReference type="SMR" id="A0K846"/>
<dbReference type="GeneID" id="98105550"/>
<dbReference type="KEGG" id="bch:Bcen2424_1922"/>
<dbReference type="HOGENOM" id="CLU_014218_8_2_4"/>
<dbReference type="GO" id="GO:0009376">
    <property type="term" value="C:HslUV protease complex"/>
    <property type="evidence" value="ECO:0007669"/>
    <property type="project" value="TreeGrafter"/>
</dbReference>
<dbReference type="GO" id="GO:0005524">
    <property type="term" value="F:ATP binding"/>
    <property type="evidence" value="ECO:0007669"/>
    <property type="project" value="UniProtKB-UniRule"/>
</dbReference>
<dbReference type="GO" id="GO:0016887">
    <property type="term" value="F:ATP hydrolysis activity"/>
    <property type="evidence" value="ECO:0007669"/>
    <property type="project" value="InterPro"/>
</dbReference>
<dbReference type="GO" id="GO:0140662">
    <property type="term" value="F:ATP-dependent protein folding chaperone"/>
    <property type="evidence" value="ECO:0007669"/>
    <property type="project" value="InterPro"/>
</dbReference>
<dbReference type="GO" id="GO:0046983">
    <property type="term" value="F:protein dimerization activity"/>
    <property type="evidence" value="ECO:0007669"/>
    <property type="project" value="InterPro"/>
</dbReference>
<dbReference type="GO" id="GO:0051082">
    <property type="term" value="F:unfolded protein binding"/>
    <property type="evidence" value="ECO:0007669"/>
    <property type="project" value="UniProtKB-UniRule"/>
</dbReference>
<dbReference type="GO" id="GO:0008270">
    <property type="term" value="F:zinc ion binding"/>
    <property type="evidence" value="ECO:0007669"/>
    <property type="project" value="InterPro"/>
</dbReference>
<dbReference type="GO" id="GO:0051301">
    <property type="term" value="P:cell division"/>
    <property type="evidence" value="ECO:0007669"/>
    <property type="project" value="TreeGrafter"/>
</dbReference>
<dbReference type="GO" id="GO:0051603">
    <property type="term" value="P:proteolysis involved in protein catabolic process"/>
    <property type="evidence" value="ECO:0007669"/>
    <property type="project" value="TreeGrafter"/>
</dbReference>
<dbReference type="CDD" id="cd19497">
    <property type="entry name" value="RecA-like_ClpX"/>
    <property type="match status" value="1"/>
</dbReference>
<dbReference type="FunFam" id="1.10.8.60:FF:000002">
    <property type="entry name" value="ATP-dependent Clp protease ATP-binding subunit ClpX"/>
    <property type="match status" value="1"/>
</dbReference>
<dbReference type="FunFam" id="3.40.50.300:FF:000005">
    <property type="entry name" value="ATP-dependent Clp protease ATP-binding subunit ClpX"/>
    <property type="match status" value="1"/>
</dbReference>
<dbReference type="Gene3D" id="1.10.8.60">
    <property type="match status" value="1"/>
</dbReference>
<dbReference type="Gene3D" id="6.20.220.10">
    <property type="entry name" value="ClpX chaperone, C4-type zinc finger domain"/>
    <property type="match status" value="1"/>
</dbReference>
<dbReference type="Gene3D" id="3.40.50.300">
    <property type="entry name" value="P-loop containing nucleotide triphosphate hydrolases"/>
    <property type="match status" value="1"/>
</dbReference>
<dbReference type="HAMAP" id="MF_00175">
    <property type="entry name" value="ClpX"/>
    <property type="match status" value="1"/>
</dbReference>
<dbReference type="InterPro" id="IPR003593">
    <property type="entry name" value="AAA+_ATPase"/>
</dbReference>
<dbReference type="InterPro" id="IPR050052">
    <property type="entry name" value="ATP-dep_Clp_protease_ClpX"/>
</dbReference>
<dbReference type="InterPro" id="IPR003959">
    <property type="entry name" value="ATPase_AAA_core"/>
</dbReference>
<dbReference type="InterPro" id="IPR019489">
    <property type="entry name" value="Clp_ATPase_C"/>
</dbReference>
<dbReference type="InterPro" id="IPR004487">
    <property type="entry name" value="Clp_protease_ATP-bd_su_ClpX"/>
</dbReference>
<dbReference type="InterPro" id="IPR046425">
    <property type="entry name" value="ClpX_bact"/>
</dbReference>
<dbReference type="InterPro" id="IPR027417">
    <property type="entry name" value="P-loop_NTPase"/>
</dbReference>
<dbReference type="InterPro" id="IPR010603">
    <property type="entry name" value="Znf_CppX_C4"/>
</dbReference>
<dbReference type="InterPro" id="IPR038366">
    <property type="entry name" value="Znf_CppX_C4_sf"/>
</dbReference>
<dbReference type="NCBIfam" id="TIGR00382">
    <property type="entry name" value="clpX"/>
    <property type="match status" value="1"/>
</dbReference>
<dbReference type="NCBIfam" id="NF003745">
    <property type="entry name" value="PRK05342.1"/>
    <property type="match status" value="1"/>
</dbReference>
<dbReference type="PANTHER" id="PTHR48102:SF7">
    <property type="entry name" value="ATP-DEPENDENT CLP PROTEASE ATP-BINDING SUBUNIT CLPX-LIKE, MITOCHONDRIAL"/>
    <property type="match status" value="1"/>
</dbReference>
<dbReference type="PANTHER" id="PTHR48102">
    <property type="entry name" value="ATP-DEPENDENT CLP PROTEASE ATP-BINDING SUBUNIT CLPX-LIKE, MITOCHONDRIAL-RELATED"/>
    <property type="match status" value="1"/>
</dbReference>
<dbReference type="Pfam" id="PF07724">
    <property type="entry name" value="AAA_2"/>
    <property type="match status" value="1"/>
</dbReference>
<dbReference type="Pfam" id="PF10431">
    <property type="entry name" value="ClpB_D2-small"/>
    <property type="match status" value="1"/>
</dbReference>
<dbReference type="Pfam" id="PF06689">
    <property type="entry name" value="zf-C4_ClpX"/>
    <property type="match status" value="1"/>
</dbReference>
<dbReference type="SMART" id="SM00382">
    <property type="entry name" value="AAA"/>
    <property type="match status" value="1"/>
</dbReference>
<dbReference type="SMART" id="SM01086">
    <property type="entry name" value="ClpB_D2-small"/>
    <property type="match status" value="1"/>
</dbReference>
<dbReference type="SMART" id="SM00994">
    <property type="entry name" value="zf-C4_ClpX"/>
    <property type="match status" value="1"/>
</dbReference>
<dbReference type="SUPFAM" id="SSF57716">
    <property type="entry name" value="Glucocorticoid receptor-like (DNA-binding domain)"/>
    <property type="match status" value="1"/>
</dbReference>
<dbReference type="SUPFAM" id="SSF52540">
    <property type="entry name" value="P-loop containing nucleoside triphosphate hydrolases"/>
    <property type="match status" value="1"/>
</dbReference>
<dbReference type="PROSITE" id="PS51902">
    <property type="entry name" value="CLPX_ZB"/>
    <property type="match status" value="1"/>
</dbReference>
<keyword id="KW-0067">ATP-binding</keyword>
<keyword id="KW-0143">Chaperone</keyword>
<keyword id="KW-0479">Metal-binding</keyword>
<keyword id="KW-0547">Nucleotide-binding</keyword>
<keyword id="KW-0862">Zinc</keyword>
<evidence type="ECO:0000255" key="1">
    <source>
        <dbReference type="HAMAP-Rule" id="MF_00175"/>
    </source>
</evidence>
<evidence type="ECO:0000255" key="2">
    <source>
        <dbReference type="PROSITE-ProRule" id="PRU01250"/>
    </source>
</evidence>